<proteinExistence type="inferred from homology"/>
<sequence length="67" mass="8119">MARWNVCSYCGKPFEPGTGKMFVRNDGRVLFFCSRKCERYYFMGRNPRKLKWTKAYQEARLQRGIRK</sequence>
<comment type="function">
    <text evidence="1">Binds to the 23S rRNA.</text>
</comment>
<comment type="cofactor">
    <cofactor evidence="1">
        <name>Zn(2+)</name>
        <dbReference type="ChEBI" id="CHEBI:29105"/>
    </cofactor>
    <text evidence="1">Binds 1 zinc ion per subunit.</text>
</comment>
<comment type="subunit">
    <text evidence="1">Part of the 50S ribosomal subunit. Forms a cluster with proteins L3 and L14.</text>
</comment>
<comment type="similarity">
    <text evidence="1">Belongs to the eukaryotic ribosomal protein eL24 family.</text>
</comment>
<name>RL24E_PYRAB</name>
<protein>
    <recommendedName>
        <fullName evidence="1">Large ribosomal subunit protein eL24</fullName>
    </recommendedName>
    <alternativeName>
        <fullName evidence="2">50S ribosomal protein L24e</fullName>
    </alternativeName>
</protein>
<organism>
    <name type="scientific">Pyrococcus abyssi (strain GE5 / Orsay)</name>
    <dbReference type="NCBI Taxonomy" id="272844"/>
    <lineage>
        <taxon>Archaea</taxon>
        <taxon>Methanobacteriati</taxon>
        <taxon>Methanobacteriota</taxon>
        <taxon>Thermococci</taxon>
        <taxon>Thermococcales</taxon>
        <taxon>Thermococcaceae</taxon>
        <taxon>Pyrococcus</taxon>
    </lineage>
</organism>
<gene>
    <name evidence="1" type="primary">rpl24e</name>
    <name type="ordered locus">PYRAB06770</name>
    <name type="ORF">PAB8165</name>
</gene>
<feature type="chain" id="PRO_0000136922" description="Large ribosomal subunit protein eL24">
    <location>
        <begin position="1"/>
        <end position="67"/>
    </location>
</feature>
<feature type="zinc finger region" description="C4-type" evidence="1">
    <location>
        <begin position="7"/>
        <end position="37"/>
    </location>
</feature>
<feature type="binding site" evidence="1">
    <location>
        <position position="7"/>
    </location>
    <ligand>
        <name>Zn(2+)</name>
        <dbReference type="ChEBI" id="CHEBI:29105"/>
    </ligand>
</feature>
<feature type="binding site" evidence="1">
    <location>
        <position position="10"/>
    </location>
    <ligand>
        <name>Zn(2+)</name>
        <dbReference type="ChEBI" id="CHEBI:29105"/>
    </ligand>
</feature>
<feature type="binding site" evidence="1">
    <location>
        <position position="33"/>
    </location>
    <ligand>
        <name>Zn(2+)</name>
        <dbReference type="ChEBI" id="CHEBI:29105"/>
    </ligand>
</feature>
<feature type="binding site" evidence="1">
    <location>
        <position position="37"/>
    </location>
    <ligand>
        <name>Zn(2+)</name>
        <dbReference type="ChEBI" id="CHEBI:29105"/>
    </ligand>
</feature>
<accession>Q9V0W3</accession>
<accession>G8ZJD5</accession>
<evidence type="ECO:0000255" key="1">
    <source>
        <dbReference type="HAMAP-Rule" id="MF_00773"/>
    </source>
</evidence>
<evidence type="ECO:0000305" key="2"/>
<reference key="1">
    <citation type="journal article" date="2003" name="Mol. Microbiol.">
        <title>An integrated analysis of the genome of the hyperthermophilic archaeon Pyrococcus abyssi.</title>
        <authorList>
            <person name="Cohen G.N."/>
            <person name="Barbe V."/>
            <person name="Flament D."/>
            <person name="Galperin M."/>
            <person name="Heilig R."/>
            <person name="Lecompte O."/>
            <person name="Poch O."/>
            <person name="Prieur D."/>
            <person name="Querellou J."/>
            <person name="Ripp R."/>
            <person name="Thierry J.-C."/>
            <person name="Van der Oost J."/>
            <person name="Weissenbach J."/>
            <person name="Zivanovic Y."/>
            <person name="Forterre P."/>
        </authorList>
    </citation>
    <scope>NUCLEOTIDE SEQUENCE [LARGE SCALE GENOMIC DNA]</scope>
    <source>
        <strain>GE5 / Orsay</strain>
    </source>
</reference>
<reference key="2">
    <citation type="journal article" date="2012" name="Curr. Microbiol.">
        <title>Re-annotation of two hyperthermophilic archaea Pyrococcus abyssi GE5 and Pyrococcus furiosus DSM 3638.</title>
        <authorList>
            <person name="Gao J."/>
            <person name="Wang J."/>
        </authorList>
    </citation>
    <scope>GENOME REANNOTATION</scope>
    <source>
        <strain>GE5 / Orsay</strain>
    </source>
</reference>
<dbReference type="EMBL" id="AJ248285">
    <property type="protein sequence ID" value="CAB49590.1"/>
    <property type="molecule type" value="Genomic_DNA"/>
</dbReference>
<dbReference type="EMBL" id="HE613800">
    <property type="protein sequence ID" value="CCE70062.1"/>
    <property type="molecule type" value="Genomic_DNA"/>
</dbReference>
<dbReference type="PIR" id="E75109">
    <property type="entry name" value="E75109"/>
</dbReference>
<dbReference type="RefSeq" id="WP_010867792.1">
    <property type="nucleotide sequence ID" value="NC_000868.1"/>
</dbReference>
<dbReference type="SMR" id="Q9V0W3"/>
<dbReference type="STRING" id="272844.PAB8165"/>
<dbReference type="KEGG" id="pab:PAB8165"/>
<dbReference type="PATRIC" id="fig|272844.11.peg.707"/>
<dbReference type="eggNOG" id="arCOG01950">
    <property type="taxonomic scope" value="Archaea"/>
</dbReference>
<dbReference type="HOGENOM" id="CLU_190191_0_0_2"/>
<dbReference type="OrthoDB" id="55506at2157"/>
<dbReference type="PhylomeDB" id="Q9V0W3"/>
<dbReference type="Proteomes" id="UP000000810">
    <property type="component" value="Chromosome"/>
</dbReference>
<dbReference type="Proteomes" id="UP000009139">
    <property type="component" value="Chromosome"/>
</dbReference>
<dbReference type="GO" id="GO:1990904">
    <property type="term" value="C:ribonucleoprotein complex"/>
    <property type="evidence" value="ECO:0007669"/>
    <property type="project" value="UniProtKB-KW"/>
</dbReference>
<dbReference type="GO" id="GO:0005840">
    <property type="term" value="C:ribosome"/>
    <property type="evidence" value="ECO:0007669"/>
    <property type="project" value="UniProtKB-KW"/>
</dbReference>
<dbReference type="GO" id="GO:0019843">
    <property type="term" value="F:rRNA binding"/>
    <property type="evidence" value="ECO:0007669"/>
    <property type="project" value="UniProtKB-UniRule"/>
</dbReference>
<dbReference type="GO" id="GO:0003735">
    <property type="term" value="F:structural constituent of ribosome"/>
    <property type="evidence" value="ECO:0007669"/>
    <property type="project" value="InterPro"/>
</dbReference>
<dbReference type="GO" id="GO:0008270">
    <property type="term" value="F:zinc ion binding"/>
    <property type="evidence" value="ECO:0007669"/>
    <property type="project" value="UniProtKB-UniRule"/>
</dbReference>
<dbReference type="GO" id="GO:0006412">
    <property type="term" value="P:translation"/>
    <property type="evidence" value="ECO:0007669"/>
    <property type="project" value="UniProtKB-UniRule"/>
</dbReference>
<dbReference type="CDD" id="cd00472">
    <property type="entry name" value="Ribosomal_L24e_L24"/>
    <property type="match status" value="1"/>
</dbReference>
<dbReference type="FunFam" id="2.30.170.20:FF:000001">
    <property type="entry name" value="probable ribosome biogenesis protein RLP24"/>
    <property type="match status" value="1"/>
</dbReference>
<dbReference type="Gene3D" id="2.30.170.20">
    <property type="entry name" value="Ribosomal protein L24e"/>
    <property type="match status" value="1"/>
</dbReference>
<dbReference type="HAMAP" id="MF_00773">
    <property type="entry name" value="Ribosomal_eL24"/>
    <property type="match status" value="1"/>
</dbReference>
<dbReference type="InterPro" id="IPR038630">
    <property type="entry name" value="L24e/L24_sf"/>
</dbReference>
<dbReference type="InterPro" id="IPR056366">
    <property type="entry name" value="Ribosomal_eL24"/>
</dbReference>
<dbReference type="InterPro" id="IPR055345">
    <property type="entry name" value="Ribosomal_eL24-rel_arc"/>
</dbReference>
<dbReference type="InterPro" id="IPR000988">
    <property type="entry name" value="Ribosomal_eL24-rel_N"/>
</dbReference>
<dbReference type="InterPro" id="IPR023442">
    <property type="entry name" value="Ribosomal_eL24_CS"/>
</dbReference>
<dbReference type="InterPro" id="IPR011017">
    <property type="entry name" value="TRASH_dom"/>
</dbReference>
<dbReference type="NCBIfam" id="NF034186">
    <property type="entry name" value="PRK14891.1-1"/>
    <property type="match status" value="1"/>
</dbReference>
<dbReference type="PANTHER" id="PTHR10792">
    <property type="entry name" value="60S RIBOSOMAL PROTEIN L24"/>
    <property type="match status" value="1"/>
</dbReference>
<dbReference type="PANTHER" id="PTHR10792:SF1">
    <property type="entry name" value="RIBOSOMAL PROTEIN L24"/>
    <property type="match status" value="1"/>
</dbReference>
<dbReference type="Pfam" id="PF01246">
    <property type="entry name" value="Ribosomal_L24e"/>
    <property type="match status" value="1"/>
</dbReference>
<dbReference type="SMART" id="SM00746">
    <property type="entry name" value="TRASH"/>
    <property type="match status" value="1"/>
</dbReference>
<dbReference type="SUPFAM" id="SSF57716">
    <property type="entry name" value="Glucocorticoid receptor-like (DNA-binding domain)"/>
    <property type="match status" value="1"/>
</dbReference>
<dbReference type="PROSITE" id="PS01073">
    <property type="entry name" value="RIBOSOMAL_L24E"/>
    <property type="match status" value="1"/>
</dbReference>
<keyword id="KW-0479">Metal-binding</keyword>
<keyword id="KW-0687">Ribonucleoprotein</keyword>
<keyword id="KW-0689">Ribosomal protein</keyword>
<keyword id="KW-0694">RNA-binding</keyword>
<keyword id="KW-0699">rRNA-binding</keyword>
<keyword id="KW-0862">Zinc</keyword>
<keyword id="KW-0863">Zinc-finger</keyword>